<organism>
    <name type="scientific">Deinococcus radiodurans (strain ATCC 13939 / DSM 20539 / JCM 16871 / CCUG 27074 / LMG 4051 / NBRC 15346 / NCIMB 9279 / VKM B-1422 / R1)</name>
    <dbReference type="NCBI Taxonomy" id="243230"/>
    <lineage>
        <taxon>Bacteria</taxon>
        <taxon>Thermotogati</taxon>
        <taxon>Deinococcota</taxon>
        <taxon>Deinococci</taxon>
        <taxon>Deinococcales</taxon>
        <taxon>Deinococcaceae</taxon>
        <taxon>Deinococcus</taxon>
    </lineage>
</organism>
<keyword id="KW-0067">ATP-binding</keyword>
<keyword id="KW-0315">Glutamine amidotransferase</keyword>
<keyword id="KW-0436">Ligase</keyword>
<keyword id="KW-0460">Magnesium</keyword>
<keyword id="KW-0479">Metal-binding</keyword>
<keyword id="KW-0547">Nucleotide-binding</keyword>
<keyword id="KW-0665">Pyrimidine biosynthesis</keyword>
<keyword id="KW-1185">Reference proteome</keyword>
<proteinExistence type="inferred from homology"/>
<name>PYRG_DEIRA</name>
<sequence>MKYIFVTGGVVSSLGKGVASASLGALLRARGYKVTAVKIDPYINIDAGTMRPYEHGECFVTASGAETDLDIGNYERFLDLDIPAGSNITTGQVYQEVIRKERAGDYLSQTVQVIPHVTDEIKRRIRAAGESAGAEIVLIEVGGTVGDIESLPFLEAIRQFRFDEGDDNVLYLHLTLVPYLGTSNEFKTKPTQHSVAALRSYGISPDIVMVRSKDKLPAEITRKIAAFTSVRENRVFSSYDVEHVYQVPLALEEQGLGKAVEELLGLEGTHPRLGVWTDAVRTIKHPKQQVTIAIAGKYTAMPDAYLSLMESLTHAGIANDARVNIKWVNAEQLAEAGAGELEGQFADVDGILVPGGFGIRGIEGKVKAAEYARTHGVPYLGICLGMQIAVIEYARHVAGIEDANSAEFDEYAKNKVIDLMPEQLEVAGMGGTMRLGDWPMELRAGTKIAELYGVPQGGTVKERHRHRYEVNPAYVEQLEAAGLTISGVTPGVEGRGAGLVETVEIADHPFFVALQAHPEFKSRPMRPSPPFAGFVKAALEHQQQ</sequence>
<evidence type="ECO:0000255" key="1">
    <source>
        <dbReference type="HAMAP-Rule" id="MF_01227"/>
    </source>
</evidence>
<reference key="1">
    <citation type="journal article" date="1999" name="Science">
        <title>Genome sequence of the radioresistant bacterium Deinococcus radiodurans R1.</title>
        <authorList>
            <person name="White O."/>
            <person name="Eisen J.A."/>
            <person name="Heidelberg J.F."/>
            <person name="Hickey E.K."/>
            <person name="Peterson J.D."/>
            <person name="Dodson R.J."/>
            <person name="Haft D.H."/>
            <person name="Gwinn M.L."/>
            <person name="Nelson W.C."/>
            <person name="Richardson D.L."/>
            <person name="Moffat K.S."/>
            <person name="Qin H."/>
            <person name="Jiang L."/>
            <person name="Pamphile W."/>
            <person name="Crosby M."/>
            <person name="Shen M."/>
            <person name="Vamathevan J.J."/>
            <person name="Lam P."/>
            <person name="McDonald L.A."/>
            <person name="Utterback T.R."/>
            <person name="Zalewski C."/>
            <person name="Makarova K.S."/>
            <person name="Aravind L."/>
            <person name="Daly M.J."/>
            <person name="Minton K.W."/>
            <person name="Fleischmann R.D."/>
            <person name="Ketchum K.A."/>
            <person name="Nelson K.E."/>
            <person name="Salzberg S.L."/>
            <person name="Smith H.O."/>
            <person name="Venter J.C."/>
            <person name="Fraser C.M."/>
        </authorList>
    </citation>
    <scope>NUCLEOTIDE SEQUENCE [LARGE SCALE GENOMIC DNA]</scope>
    <source>
        <strain>ATCC 13939 / DSM 20539 / JCM 16871 / CCUG 27074 / LMG 4051 / NBRC 15346 / NCIMB 9279 / VKM B-1422 / R1</strain>
    </source>
</reference>
<dbReference type="EC" id="6.3.4.2" evidence="1"/>
<dbReference type="EMBL" id="AE000513">
    <property type="protein sequence ID" value="AAF11136.1"/>
    <property type="molecule type" value="Genomic_DNA"/>
</dbReference>
<dbReference type="PIR" id="B75379">
    <property type="entry name" value="B75379"/>
</dbReference>
<dbReference type="RefSeq" id="NP_295296.1">
    <property type="nucleotide sequence ID" value="NC_001263.1"/>
</dbReference>
<dbReference type="RefSeq" id="WP_010888212.1">
    <property type="nucleotide sequence ID" value="NC_001263.1"/>
</dbReference>
<dbReference type="SMR" id="Q9RU23"/>
<dbReference type="FunCoup" id="Q9RU23">
    <property type="interactions" value="446"/>
</dbReference>
<dbReference type="STRING" id="243230.DR_1573"/>
<dbReference type="MEROPS" id="C26.964"/>
<dbReference type="PaxDb" id="243230-DR_1573"/>
<dbReference type="EnsemblBacteria" id="AAF11136">
    <property type="protein sequence ID" value="AAF11136"/>
    <property type="gene ID" value="DR_1573"/>
</dbReference>
<dbReference type="GeneID" id="69517811"/>
<dbReference type="KEGG" id="dra:DR_1573"/>
<dbReference type="PATRIC" id="fig|243230.17.peg.1776"/>
<dbReference type="eggNOG" id="COG0504">
    <property type="taxonomic scope" value="Bacteria"/>
</dbReference>
<dbReference type="HOGENOM" id="CLU_011675_5_0_0"/>
<dbReference type="InParanoid" id="Q9RU23"/>
<dbReference type="OrthoDB" id="9801107at2"/>
<dbReference type="UniPathway" id="UPA00159">
    <property type="reaction ID" value="UER00277"/>
</dbReference>
<dbReference type="Proteomes" id="UP000002524">
    <property type="component" value="Chromosome 1"/>
</dbReference>
<dbReference type="GO" id="GO:0005829">
    <property type="term" value="C:cytosol"/>
    <property type="evidence" value="ECO:0000318"/>
    <property type="project" value="GO_Central"/>
</dbReference>
<dbReference type="GO" id="GO:0005524">
    <property type="term" value="F:ATP binding"/>
    <property type="evidence" value="ECO:0007669"/>
    <property type="project" value="UniProtKB-KW"/>
</dbReference>
<dbReference type="GO" id="GO:0003883">
    <property type="term" value="F:CTP synthase activity"/>
    <property type="evidence" value="ECO:0000318"/>
    <property type="project" value="GO_Central"/>
</dbReference>
<dbReference type="GO" id="GO:0004359">
    <property type="term" value="F:glutaminase activity"/>
    <property type="evidence" value="ECO:0007669"/>
    <property type="project" value="RHEA"/>
</dbReference>
<dbReference type="GO" id="GO:0042802">
    <property type="term" value="F:identical protein binding"/>
    <property type="evidence" value="ECO:0000318"/>
    <property type="project" value="GO_Central"/>
</dbReference>
<dbReference type="GO" id="GO:0046872">
    <property type="term" value="F:metal ion binding"/>
    <property type="evidence" value="ECO:0007669"/>
    <property type="project" value="UniProtKB-KW"/>
</dbReference>
<dbReference type="GO" id="GO:0044210">
    <property type="term" value="P:'de novo' CTP biosynthetic process"/>
    <property type="evidence" value="ECO:0007669"/>
    <property type="project" value="UniProtKB-UniRule"/>
</dbReference>
<dbReference type="GO" id="GO:0006241">
    <property type="term" value="P:CTP biosynthetic process"/>
    <property type="evidence" value="ECO:0000318"/>
    <property type="project" value="GO_Central"/>
</dbReference>
<dbReference type="GO" id="GO:0019856">
    <property type="term" value="P:pyrimidine nucleobase biosynthetic process"/>
    <property type="evidence" value="ECO:0000318"/>
    <property type="project" value="GO_Central"/>
</dbReference>
<dbReference type="CDD" id="cd03113">
    <property type="entry name" value="CTPS_N"/>
    <property type="match status" value="1"/>
</dbReference>
<dbReference type="CDD" id="cd01746">
    <property type="entry name" value="GATase1_CTP_Synthase"/>
    <property type="match status" value="1"/>
</dbReference>
<dbReference type="FunFam" id="3.40.50.300:FF:000009">
    <property type="entry name" value="CTP synthase"/>
    <property type="match status" value="1"/>
</dbReference>
<dbReference type="FunFam" id="3.40.50.880:FF:000002">
    <property type="entry name" value="CTP synthase"/>
    <property type="match status" value="1"/>
</dbReference>
<dbReference type="Gene3D" id="3.40.50.880">
    <property type="match status" value="1"/>
</dbReference>
<dbReference type="Gene3D" id="3.40.50.300">
    <property type="entry name" value="P-loop containing nucleotide triphosphate hydrolases"/>
    <property type="match status" value="1"/>
</dbReference>
<dbReference type="HAMAP" id="MF_01227">
    <property type="entry name" value="PyrG"/>
    <property type="match status" value="1"/>
</dbReference>
<dbReference type="InterPro" id="IPR029062">
    <property type="entry name" value="Class_I_gatase-like"/>
</dbReference>
<dbReference type="InterPro" id="IPR004468">
    <property type="entry name" value="CTP_synthase"/>
</dbReference>
<dbReference type="InterPro" id="IPR017456">
    <property type="entry name" value="CTP_synthase_N"/>
</dbReference>
<dbReference type="InterPro" id="IPR017926">
    <property type="entry name" value="GATASE"/>
</dbReference>
<dbReference type="InterPro" id="IPR033828">
    <property type="entry name" value="GATase1_CTP_Synthase"/>
</dbReference>
<dbReference type="InterPro" id="IPR027417">
    <property type="entry name" value="P-loop_NTPase"/>
</dbReference>
<dbReference type="NCBIfam" id="NF003792">
    <property type="entry name" value="PRK05380.1"/>
    <property type="match status" value="1"/>
</dbReference>
<dbReference type="NCBIfam" id="TIGR00337">
    <property type="entry name" value="PyrG"/>
    <property type="match status" value="1"/>
</dbReference>
<dbReference type="PANTHER" id="PTHR11550">
    <property type="entry name" value="CTP SYNTHASE"/>
    <property type="match status" value="1"/>
</dbReference>
<dbReference type="PANTHER" id="PTHR11550:SF0">
    <property type="entry name" value="CTP SYNTHASE-RELATED"/>
    <property type="match status" value="1"/>
</dbReference>
<dbReference type="Pfam" id="PF06418">
    <property type="entry name" value="CTP_synth_N"/>
    <property type="match status" value="1"/>
</dbReference>
<dbReference type="Pfam" id="PF00117">
    <property type="entry name" value="GATase"/>
    <property type="match status" value="1"/>
</dbReference>
<dbReference type="SUPFAM" id="SSF52317">
    <property type="entry name" value="Class I glutamine amidotransferase-like"/>
    <property type="match status" value="1"/>
</dbReference>
<dbReference type="SUPFAM" id="SSF52540">
    <property type="entry name" value="P-loop containing nucleoside triphosphate hydrolases"/>
    <property type="match status" value="1"/>
</dbReference>
<dbReference type="PROSITE" id="PS51273">
    <property type="entry name" value="GATASE_TYPE_1"/>
    <property type="match status" value="1"/>
</dbReference>
<feature type="chain" id="PRO_0000138182" description="CTP synthase">
    <location>
        <begin position="1"/>
        <end position="544"/>
    </location>
</feature>
<feature type="domain" description="Glutamine amidotransferase type-1" evidence="1">
    <location>
        <begin position="291"/>
        <end position="544"/>
    </location>
</feature>
<feature type="region of interest" description="Amidoligase domain" evidence="1">
    <location>
        <begin position="1"/>
        <end position="266"/>
    </location>
</feature>
<feature type="active site" description="Nucleophile; for glutamine hydrolysis" evidence="1">
    <location>
        <position position="383"/>
    </location>
</feature>
<feature type="active site" evidence="1">
    <location>
        <position position="517"/>
    </location>
</feature>
<feature type="active site" evidence="1">
    <location>
        <position position="519"/>
    </location>
</feature>
<feature type="binding site" evidence="1">
    <location>
        <position position="12"/>
    </location>
    <ligand>
        <name>CTP</name>
        <dbReference type="ChEBI" id="CHEBI:37563"/>
        <note>allosteric inhibitor</note>
    </ligand>
</feature>
<feature type="binding site" evidence="1">
    <location>
        <position position="12"/>
    </location>
    <ligand>
        <name>UTP</name>
        <dbReference type="ChEBI" id="CHEBI:46398"/>
    </ligand>
</feature>
<feature type="binding site" evidence="1">
    <location>
        <begin position="13"/>
        <end position="18"/>
    </location>
    <ligand>
        <name>ATP</name>
        <dbReference type="ChEBI" id="CHEBI:30616"/>
    </ligand>
</feature>
<feature type="binding site" evidence="1">
    <location>
        <position position="53"/>
    </location>
    <ligand>
        <name>L-glutamine</name>
        <dbReference type="ChEBI" id="CHEBI:58359"/>
    </ligand>
</feature>
<feature type="binding site" evidence="1">
    <location>
        <position position="70"/>
    </location>
    <ligand>
        <name>ATP</name>
        <dbReference type="ChEBI" id="CHEBI:30616"/>
    </ligand>
</feature>
<feature type="binding site" evidence="1">
    <location>
        <position position="70"/>
    </location>
    <ligand>
        <name>Mg(2+)</name>
        <dbReference type="ChEBI" id="CHEBI:18420"/>
    </ligand>
</feature>
<feature type="binding site" evidence="1">
    <location>
        <position position="140"/>
    </location>
    <ligand>
        <name>Mg(2+)</name>
        <dbReference type="ChEBI" id="CHEBI:18420"/>
    </ligand>
</feature>
<feature type="binding site" evidence="1">
    <location>
        <begin position="147"/>
        <end position="149"/>
    </location>
    <ligand>
        <name>CTP</name>
        <dbReference type="ChEBI" id="CHEBI:37563"/>
        <note>allosteric inhibitor</note>
    </ligand>
</feature>
<feature type="binding site" evidence="1">
    <location>
        <begin position="187"/>
        <end position="192"/>
    </location>
    <ligand>
        <name>CTP</name>
        <dbReference type="ChEBI" id="CHEBI:37563"/>
        <note>allosteric inhibitor</note>
    </ligand>
</feature>
<feature type="binding site" evidence="1">
    <location>
        <begin position="187"/>
        <end position="192"/>
    </location>
    <ligand>
        <name>UTP</name>
        <dbReference type="ChEBI" id="CHEBI:46398"/>
    </ligand>
</feature>
<feature type="binding site" evidence="1">
    <location>
        <position position="223"/>
    </location>
    <ligand>
        <name>CTP</name>
        <dbReference type="ChEBI" id="CHEBI:37563"/>
        <note>allosteric inhibitor</note>
    </ligand>
</feature>
<feature type="binding site" evidence="1">
    <location>
        <position position="223"/>
    </location>
    <ligand>
        <name>UTP</name>
        <dbReference type="ChEBI" id="CHEBI:46398"/>
    </ligand>
</feature>
<feature type="binding site" evidence="1">
    <location>
        <position position="356"/>
    </location>
    <ligand>
        <name>L-glutamine</name>
        <dbReference type="ChEBI" id="CHEBI:58359"/>
    </ligand>
</feature>
<feature type="binding site" evidence="1">
    <location>
        <begin position="384"/>
        <end position="387"/>
    </location>
    <ligand>
        <name>L-glutamine</name>
        <dbReference type="ChEBI" id="CHEBI:58359"/>
    </ligand>
</feature>
<feature type="binding site" evidence="1">
    <location>
        <position position="407"/>
    </location>
    <ligand>
        <name>L-glutamine</name>
        <dbReference type="ChEBI" id="CHEBI:58359"/>
    </ligand>
</feature>
<feature type="binding site" evidence="1">
    <location>
        <position position="467"/>
    </location>
    <ligand>
        <name>L-glutamine</name>
        <dbReference type="ChEBI" id="CHEBI:58359"/>
    </ligand>
</feature>
<protein>
    <recommendedName>
        <fullName evidence="1">CTP synthase</fullName>
        <ecNumber evidence="1">6.3.4.2</ecNumber>
    </recommendedName>
    <alternativeName>
        <fullName evidence="1">Cytidine 5'-triphosphate synthase</fullName>
    </alternativeName>
    <alternativeName>
        <fullName evidence="1">Cytidine triphosphate synthetase</fullName>
        <shortName evidence="1">CTP synthetase</shortName>
        <shortName evidence="1">CTPS</shortName>
    </alternativeName>
    <alternativeName>
        <fullName evidence="1">UTP--ammonia ligase</fullName>
    </alternativeName>
</protein>
<gene>
    <name evidence="1" type="primary">pyrG</name>
    <name type="ordered locus">DR_1573</name>
</gene>
<comment type="function">
    <text evidence="1">Catalyzes the ATP-dependent amination of UTP to CTP with either L-glutamine or ammonia as the source of nitrogen. Regulates intracellular CTP levels through interactions with the four ribonucleotide triphosphates.</text>
</comment>
<comment type="catalytic activity">
    <reaction evidence="1">
        <text>UTP + L-glutamine + ATP + H2O = CTP + L-glutamate + ADP + phosphate + 2 H(+)</text>
        <dbReference type="Rhea" id="RHEA:26426"/>
        <dbReference type="ChEBI" id="CHEBI:15377"/>
        <dbReference type="ChEBI" id="CHEBI:15378"/>
        <dbReference type="ChEBI" id="CHEBI:29985"/>
        <dbReference type="ChEBI" id="CHEBI:30616"/>
        <dbReference type="ChEBI" id="CHEBI:37563"/>
        <dbReference type="ChEBI" id="CHEBI:43474"/>
        <dbReference type="ChEBI" id="CHEBI:46398"/>
        <dbReference type="ChEBI" id="CHEBI:58359"/>
        <dbReference type="ChEBI" id="CHEBI:456216"/>
        <dbReference type="EC" id="6.3.4.2"/>
    </reaction>
</comment>
<comment type="catalytic activity">
    <reaction evidence="1">
        <text>L-glutamine + H2O = L-glutamate + NH4(+)</text>
        <dbReference type="Rhea" id="RHEA:15889"/>
        <dbReference type="ChEBI" id="CHEBI:15377"/>
        <dbReference type="ChEBI" id="CHEBI:28938"/>
        <dbReference type="ChEBI" id="CHEBI:29985"/>
        <dbReference type="ChEBI" id="CHEBI:58359"/>
    </reaction>
</comment>
<comment type="catalytic activity">
    <reaction evidence="1">
        <text>UTP + NH4(+) + ATP = CTP + ADP + phosphate + 2 H(+)</text>
        <dbReference type="Rhea" id="RHEA:16597"/>
        <dbReference type="ChEBI" id="CHEBI:15378"/>
        <dbReference type="ChEBI" id="CHEBI:28938"/>
        <dbReference type="ChEBI" id="CHEBI:30616"/>
        <dbReference type="ChEBI" id="CHEBI:37563"/>
        <dbReference type="ChEBI" id="CHEBI:43474"/>
        <dbReference type="ChEBI" id="CHEBI:46398"/>
        <dbReference type="ChEBI" id="CHEBI:456216"/>
    </reaction>
</comment>
<comment type="activity regulation">
    <text evidence="1">Allosterically activated by GTP, when glutamine is the substrate; GTP has no effect on the reaction when ammonia is the substrate. The allosteric effector GTP functions by stabilizing the protein conformation that binds the tetrahedral intermediate(s) formed during glutamine hydrolysis. Inhibited by the product CTP, via allosteric rather than competitive inhibition.</text>
</comment>
<comment type="pathway">
    <text evidence="1">Pyrimidine metabolism; CTP biosynthesis via de novo pathway; CTP from UDP: step 2/2.</text>
</comment>
<comment type="subunit">
    <text evidence="1">Homotetramer.</text>
</comment>
<comment type="miscellaneous">
    <text evidence="1">CTPSs have evolved a hybrid strategy for distinguishing between UTP and CTP. The overlapping regions of the product feedback inhibitory and substrate sites recognize a common feature in both compounds, the triphosphate moiety. To differentiate isosteric substrate and product pyrimidine rings, an additional pocket far from the expected kinase/ligase catalytic site, specifically recognizes the cytosine and ribose portions of the product inhibitor.</text>
</comment>
<comment type="similarity">
    <text evidence="1">Belongs to the CTP synthase family.</text>
</comment>
<accession>Q9RU23</accession>